<accession>P27598</accession>
<protein>
    <recommendedName>
        <fullName>Alpha-1,4 glucan phosphorylase L isozyme, chloroplastic/amyloplastic</fullName>
        <ecNumber>2.4.1.1</ecNumber>
    </recommendedName>
    <alternativeName>
        <fullName>Starch phosphorylase L</fullName>
    </alternativeName>
</protein>
<organism>
    <name type="scientific">Ipomoea batatas</name>
    <name type="common">Sweet potato</name>
    <name type="synonym">Convolvulus batatas</name>
    <dbReference type="NCBI Taxonomy" id="4120"/>
    <lineage>
        <taxon>Eukaryota</taxon>
        <taxon>Viridiplantae</taxon>
        <taxon>Streptophyta</taxon>
        <taxon>Embryophyta</taxon>
        <taxon>Tracheophyta</taxon>
        <taxon>Spermatophyta</taxon>
        <taxon>Magnoliopsida</taxon>
        <taxon>eudicotyledons</taxon>
        <taxon>Gunneridae</taxon>
        <taxon>Pentapetalae</taxon>
        <taxon>asterids</taxon>
        <taxon>lamiids</taxon>
        <taxon>Solanales</taxon>
        <taxon>Convolvulaceae</taxon>
        <taxon>Ipomoeeae</taxon>
        <taxon>Ipomoea</taxon>
    </lineage>
</organism>
<feature type="transit peptide" description="Chloroplast" evidence="2">
    <location>
        <begin position="1"/>
        <end position="43"/>
    </location>
</feature>
<feature type="chain" id="PRO_0000012291" description="Alpha-1,4 glucan phosphorylase L isozyme, chloroplastic/amyloplastic">
    <location>
        <begin position="44"/>
        <end position="955"/>
    </location>
</feature>
<feature type="region of interest" description="Disordered" evidence="3">
    <location>
        <begin position="522"/>
        <end position="550"/>
    </location>
</feature>
<feature type="compositionally biased region" description="Acidic residues" evidence="3">
    <location>
        <begin position="528"/>
        <end position="545"/>
    </location>
</feature>
<feature type="modified residue" description="N6-(pyridoxal phosphate)lysine" evidence="1">
    <location>
        <position position="801"/>
    </location>
</feature>
<comment type="function">
    <text>Phosphorylase is an important allosteric enzyme in carbohydrate metabolism. Enzymes from different sources differ in their regulatory mechanisms and in their natural substrates. However, all known phosphorylases share catalytic and structural properties.</text>
</comment>
<comment type="catalytic activity">
    <reaction>
        <text>[(1-&gt;4)-alpha-D-glucosyl](n) + phosphate = [(1-&gt;4)-alpha-D-glucosyl](n-1) + alpha-D-glucose 1-phosphate</text>
        <dbReference type="Rhea" id="RHEA:41732"/>
        <dbReference type="Rhea" id="RHEA-COMP:9584"/>
        <dbReference type="Rhea" id="RHEA-COMP:9586"/>
        <dbReference type="ChEBI" id="CHEBI:15444"/>
        <dbReference type="ChEBI" id="CHEBI:43474"/>
        <dbReference type="ChEBI" id="CHEBI:58601"/>
        <dbReference type="EC" id="2.4.1.1"/>
    </reaction>
</comment>
<comment type="cofactor">
    <cofactor>
        <name>pyridoxal 5'-phosphate</name>
        <dbReference type="ChEBI" id="CHEBI:597326"/>
    </cofactor>
</comment>
<comment type="subcellular location">
    <subcellularLocation>
        <location>Plastid</location>
        <location>Chloroplast</location>
    </subcellularLocation>
    <subcellularLocation>
        <location>Plastid</location>
        <location>Amyloplast</location>
    </subcellularLocation>
</comment>
<comment type="similarity">
    <text evidence="4">Belongs to the glycogen phosphorylase family.</text>
</comment>
<evidence type="ECO:0000250" key="1"/>
<evidence type="ECO:0000255" key="2"/>
<evidence type="ECO:0000256" key="3">
    <source>
        <dbReference type="SAM" id="MobiDB-lite"/>
    </source>
</evidence>
<evidence type="ECO:0000305" key="4"/>
<dbReference type="EC" id="2.4.1.1"/>
<dbReference type="EMBL" id="M64362">
    <property type="protein sequence ID" value="AAA63271.1"/>
    <property type="molecule type" value="mRNA"/>
</dbReference>
<dbReference type="PIR" id="T10947">
    <property type="entry name" value="T10947"/>
</dbReference>
<dbReference type="SMR" id="P27598"/>
<dbReference type="CAZy" id="GT35">
    <property type="family name" value="Glycosyltransferase Family 35"/>
</dbReference>
<dbReference type="GO" id="GO:0009501">
    <property type="term" value="C:amyloplast"/>
    <property type="evidence" value="ECO:0007669"/>
    <property type="project" value="UniProtKB-SubCell"/>
</dbReference>
<dbReference type="GO" id="GO:0009507">
    <property type="term" value="C:chloroplast"/>
    <property type="evidence" value="ECO:0007669"/>
    <property type="project" value="UniProtKB-SubCell"/>
</dbReference>
<dbReference type="GO" id="GO:0008184">
    <property type="term" value="F:glycogen phosphorylase activity"/>
    <property type="evidence" value="ECO:0007669"/>
    <property type="project" value="InterPro"/>
</dbReference>
<dbReference type="GO" id="GO:0030170">
    <property type="term" value="F:pyridoxal phosphate binding"/>
    <property type="evidence" value="ECO:0007669"/>
    <property type="project" value="InterPro"/>
</dbReference>
<dbReference type="GO" id="GO:0005980">
    <property type="term" value="P:glycogen catabolic process"/>
    <property type="evidence" value="ECO:0007669"/>
    <property type="project" value="TreeGrafter"/>
</dbReference>
<dbReference type="CDD" id="cd04300">
    <property type="entry name" value="GT35_Glycogen_Phosphorylase"/>
    <property type="match status" value="1"/>
</dbReference>
<dbReference type="FunFam" id="3.40.50.2000:FF:000003">
    <property type="entry name" value="Alpha-1,4 glucan phosphorylase"/>
    <property type="match status" value="1"/>
</dbReference>
<dbReference type="FunFam" id="3.40.50.2000:FF:000105">
    <property type="entry name" value="Alpha-1,4 glucan phosphorylase"/>
    <property type="match status" value="1"/>
</dbReference>
<dbReference type="Gene3D" id="3.40.50.2000">
    <property type="entry name" value="Glycogen Phosphorylase B"/>
    <property type="match status" value="3"/>
</dbReference>
<dbReference type="InterPro" id="IPR011833">
    <property type="entry name" value="Glycg_phsphrylas"/>
</dbReference>
<dbReference type="InterPro" id="IPR000811">
    <property type="entry name" value="Glyco_trans_35"/>
</dbReference>
<dbReference type="InterPro" id="IPR035090">
    <property type="entry name" value="Pyridoxal_P_attach_site"/>
</dbReference>
<dbReference type="NCBIfam" id="TIGR02093">
    <property type="entry name" value="P_ylase"/>
    <property type="match status" value="1"/>
</dbReference>
<dbReference type="PANTHER" id="PTHR11468:SF28">
    <property type="entry name" value="ALPHA-GLUCAN PHOSPHORYLASE 1"/>
    <property type="match status" value="1"/>
</dbReference>
<dbReference type="PANTHER" id="PTHR11468">
    <property type="entry name" value="GLYCOGEN PHOSPHORYLASE"/>
    <property type="match status" value="1"/>
</dbReference>
<dbReference type="Pfam" id="PF00343">
    <property type="entry name" value="Phosphorylase"/>
    <property type="match status" value="2"/>
</dbReference>
<dbReference type="PIRSF" id="PIRSF000460">
    <property type="entry name" value="Pprylas_GlgP"/>
    <property type="match status" value="1"/>
</dbReference>
<dbReference type="SUPFAM" id="SSF53756">
    <property type="entry name" value="UDP-Glycosyltransferase/glycogen phosphorylase"/>
    <property type="match status" value="1"/>
</dbReference>
<dbReference type="PROSITE" id="PS00102">
    <property type="entry name" value="PHOSPHORYLASE"/>
    <property type="match status" value="1"/>
</dbReference>
<sequence length="955" mass="108520">MSRLSGITPRARDDRSQFQNPRLEIAVPDRTAGLQRTKRTLLVKCVLDETKQTIQHVVTEKNEGTLLDAASIASSIKYHAEFSPAFSPERFELPKAYFATAQSVRDALIVNWNATYDYYEKLNMKQAYYLSMEFLQGRALLNAIGNLELTGEYAEALNKLGHNLENVASKEPDAALGNGGLGRLASCFLDSLATLNYPAWGYGLRYKYGLFKQRITKDGQEEVAEDWLELGNPWEIIRMDVSYPVKFFGKVITGSDGKKHWIGGEDILAVAYDVPIPGYKTRTTISLRLWSTKVPSEDFDLYSFNAGEHTKACEAQANAEKICYILYPGDESIEGKILRLKQQYTLCSASLQDIIARFERRSGEYVKWEEFPEKVAVQMNDTHPTLCIPELIRILIDLKGLSWKEAWNITQRTVAYTNHTVLPEALEKWSYELMEKLLPRHIEIIEMIDEQLINEIVSEYGTSDLDMLEKKLNDMRILENFDIPSSIANLFTKPKETSIVDPSEEVEVSGKVVTESVEVSDKVVTESEKDELEEKDTELEKDEDPVPAPIPPKMVRMANLCVVGGHAVNGVAEIHSDIVKEDVFNDFYQLWPEKFQNKTNGVTPRRWIRFCNPALSNIITKWIGTEDWVLNTEKLAELRKFADNEDLQIEWRAAKRSNKVKVASFLKERTGYSVSPNAMFDIQVKRIHEYKRQLLNILGIVYRYKQMKEMSAREREAKFVPRVCIFGGKAFATYVQAKRIAKFITDVGATINHDPEIGDLLKVIFVPDYNVSAAELLIPASGLSQHISTAGMEASGQSNMKFAMNGCILIGTLDGANVEIRQEVGEENFFLFGAEAHEIAGLRKERAEGKFVPDERFEEVKEFIKRGVFGSNTYDELLGSLEGNEGFGRGDYFLVGKDFPSYIECQEKVDEAYRDQKIWTRMSILNTAGSYKFSSDRTIHEYAKDIWNIQPVVFP</sequence>
<name>PHSL_IPOBA</name>
<reference key="1">
    <citation type="journal article" date="1991" name="Plant Physiol.">
        <title>Primary structure of sweet potato starch phosphorylase deduced from its cDNA sequence.</title>
        <authorList>
            <person name="Lin C.T."/>
            <person name="Yeh K.W."/>
            <person name="Lee P.D."/>
            <person name="Su J.C."/>
        </authorList>
    </citation>
    <scope>NUCLEOTIDE SEQUENCE [MRNA]</scope>
</reference>
<proteinExistence type="evidence at transcript level"/>
<keyword id="KW-0021">Allosteric enzyme</keyword>
<keyword id="KW-0035">Amyloplast</keyword>
<keyword id="KW-0119">Carbohydrate metabolism</keyword>
<keyword id="KW-0150">Chloroplast</keyword>
<keyword id="KW-0328">Glycosyltransferase</keyword>
<keyword id="KW-0934">Plastid</keyword>
<keyword id="KW-0663">Pyridoxal phosphate</keyword>
<keyword id="KW-0808">Transferase</keyword>
<keyword id="KW-0809">Transit peptide</keyword>